<comment type="function">
    <text evidence="1">Catalyzes the condensation of pantoate with beta-alanine in an ATP-dependent reaction via a pantoyl-adenylate intermediate.</text>
</comment>
<comment type="catalytic activity">
    <reaction evidence="1">
        <text>(R)-pantoate + beta-alanine + ATP = (R)-pantothenate + AMP + diphosphate + H(+)</text>
        <dbReference type="Rhea" id="RHEA:10912"/>
        <dbReference type="ChEBI" id="CHEBI:15378"/>
        <dbReference type="ChEBI" id="CHEBI:15980"/>
        <dbReference type="ChEBI" id="CHEBI:29032"/>
        <dbReference type="ChEBI" id="CHEBI:30616"/>
        <dbReference type="ChEBI" id="CHEBI:33019"/>
        <dbReference type="ChEBI" id="CHEBI:57966"/>
        <dbReference type="ChEBI" id="CHEBI:456215"/>
        <dbReference type="EC" id="6.3.2.1"/>
    </reaction>
</comment>
<comment type="pathway">
    <text evidence="1">Cofactor biosynthesis; (R)-pantothenate biosynthesis; (R)-pantothenate from (R)-pantoate and beta-alanine: step 1/1.</text>
</comment>
<comment type="subunit">
    <text evidence="1">Homodimer.</text>
</comment>
<comment type="subcellular location">
    <subcellularLocation>
        <location evidence="1">Cytoplasm</location>
    </subcellularLocation>
</comment>
<comment type="miscellaneous">
    <text evidence="1">The reaction proceeds by a bi uni uni bi ping pong mechanism.</text>
</comment>
<comment type="similarity">
    <text evidence="1">Belongs to the pantothenate synthetase family.</text>
</comment>
<reference key="1">
    <citation type="submission" date="2007-05" db="EMBL/GenBank/DDBJ databases">
        <title>Complete sequence of chromosome of Psychrobacter sp. PRwf-1.</title>
        <authorList>
            <consortium name="US DOE Joint Genome Institute"/>
            <person name="Copeland A."/>
            <person name="Lucas S."/>
            <person name="Lapidus A."/>
            <person name="Barry K."/>
            <person name="Detter J.C."/>
            <person name="Glavina del Rio T."/>
            <person name="Hammon N."/>
            <person name="Israni S."/>
            <person name="Dalin E."/>
            <person name="Tice H."/>
            <person name="Pitluck S."/>
            <person name="Chain P."/>
            <person name="Malfatti S."/>
            <person name="Shin M."/>
            <person name="Vergez L."/>
            <person name="Schmutz J."/>
            <person name="Larimer F."/>
            <person name="Land M."/>
            <person name="Hauser L."/>
            <person name="Kyrpides N."/>
            <person name="Kim E."/>
            <person name="Tiedje J."/>
            <person name="Richardson P."/>
        </authorList>
    </citation>
    <scope>NUCLEOTIDE SEQUENCE [LARGE SCALE GENOMIC DNA]</scope>
    <source>
        <strain>PRwf-1</strain>
    </source>
</reference>
<protein>
    <recommendedName>
        <fullName evidence="1">Pantothenate synthetase</fullName>
        <shortName evidence="1">PS</shortName>
        <ecNumber evidence="1">6.3.2.1</ecNumber>
    </recommendedName>
    <alternativeName>
        <fullName evidence="1">Pantoate--beta-alanine ligase</fullName>
    </alternativeName>
    <alternativeName>
        <fullName evidence="1">Pantoate-activating enzyme</fullName>
    </alternativeName>
</protein>
<evidence type="ECO:0000255" key="1">
    <source>
        <dbReference type="HAMAP-Rule" id="MF_00158"/>
    </source>
</evidence>
<proteinExistence type="inferred from homology"/>
<name>PANC_PSYWF</name>
<sequence length="286" mass="31674">MTITFNAIQDLQQALHPLRTDKKIALVPTMGNLHDGHISLVKLAQEHADVVVVSIFVNPTQFGVGEDLDSYPRTLEADTQKLTEAGVDYIFAPSVEEMYPVMPPPTQVLAGAISQYLCGKSRPTHFDGVGIVVTKLFNIVQPNVAVFGKKDYQQLAIIKQLVRDLSYNIEIIGAPLVRAVDGLALSSRNQYLTETERQIAPMLNQHLSKLAQKLKNTPIANNQQLQALIEDTIAQINNAGFRVDYLEVSNQDLSKITDFYGQKQWVIAVAAWLGKARLLDNQEVNG</sequence>
<gene>
    <name evidence="1" type="primary">panC</name>
    <name type="ordered locus">PsycPRwf_2130</name>
</gene>
<dbReference type="EC" id="6.3.2.1" evidence="1"/>
<dbReference type="EMBL" id="CP000713">
    <property type="protein sequence ID" value="ABQ95070.1"/>
    <property type="molecule type" value="Genomic_DNA"/>
</dbReference>
<dbReference type="SMR" id="A5WHC9"/>
<dbReference type="STRING" id="349106.PsycPRwf_2130"/>
<dbReference type="KEGG" id="prw:PsycPRwf_2130"/>
<dbReference type="eggNOG" id="COG0414">
    <property type="taxonomic scope" value="Bacteria"/>
</dbReference>
<dbReference type="HOGENOM" id="CLU_047148_0_0_6"/>
<dbReference type="UniPathway" id="UPA00028">
    <property type="reaction ID" value="UER00005"/>
</dbReference>
<dbReference type="GO" id="GO:0005829">
    <property type="term" value="C:cytosol"/>
    <property type="evidence" value="ECO:0007669"/>
    <property type="project" value="TreeGrafter"/>
</dbReference>
<dbReference type="GO" id="GO:0005524">
    <property type="term" value="F:ATP binding"/>
    <property type="evidence" value="ECO:0007669"/>
    <property type="project" value="UniProtKB-KW"/>
</dbReference>
<dbReference type="GO" id="GO:0004592">
    <property type="term" value="F:pantoate-beta-alanine ligase activity"/>
    <property type="evidence" value="ECO:0007669"/>
    <property type="project" value="UniProtKB-UniRule"/>
</dbReference>
<dbReference type="GO" id="GO:0015940">
    <property type="term" value="P:pantothenate biosynthetic process"/>
    <property type="evidence" value="ECO:0007669"/>
    <property type="project" value="UniProtKB-UniRule"/>
</dbReference>
<dbReference type="CDD" id="cd00560">
    <property type="entry name" value="PanC"/>
    <property type="match status" value="1"/>
</dbReference>
<dbReference type="FunFam" id="3.40.50.620:FF:000013">
    <property type="entry name" value="Pantothenate synthetase"/>
    <property type="match status" value="1"/>
</dbReference>
<dbReference type="Gene3D" id="3.40.50.620">
    <property type="entry name" value="HUPs"/>
    <property type="match status" value="1"/>
</dbReference>
<dbReference type="Gene3D" id="3.30.1300.10">
    <property type="entry name" value="Pantoate-beta-alanine ligase, C-terminal domain"/>
    <property type="match status" value="1"/>
</dbReference>
<dbReference type="HAMAP" id="MF_00158">
    <property type="entry name" value="PanC"/>
    <property type="match status" value="1"/>
</dbReference>
<dbReference type="InterPro" id="IPR003721">
    <property type="entry name" value="Pantoate_ligase"/>
</dbReference>
<dbReference type="InterPro" id="IPR042176">
    <property type="entry name" value="Pantoate_ligase_C"/>
</dbReference>
<dbReference type="InterPro" id="IPR014729">
    <property type="entry name" value="Rossmann-like_a/b/a_fold"/>
</dbReference>
<dbReference type="NCBIfam" id="TIGR00018">
    <property type="entry name" value="panC"/>
    <property type="match status" value="1"/>
</dbReference>
<dbReference type="PANTHER" id="PTHR21299">
    <property type="entry name" value="CYTIDYLATE KINASE/PANTOATE-BETA-ALANINE LIGASE"/>
    <property type="match status" value="1"/>
</dbReference>
<dbReference type="PANTHER" id="PTHR21299:SF1">
    <property type="entry name" value="PANTOATE--BETA-ALANINE LIGASE"/>
    <property type="match status" value="1"/>
</dbReference>
<dbReference type="Pfam" id="PF02569">
    <property type="entry name" value="Pantoate_ligase"/>
    <property type="match status" value="1"/>
</dbReference>
<dbReference type="SUPFAM" id="SSF52374">
    <property type="entry name" value="Nucleotidylyl transferase"/>
    <property type="match status" value="1"/>
</dbReference>
<feature type="chain" id="PRO_1000076861" description="Pantothenate synthetase">
    <location>
        <begin position="1"/>
        <end position="286"/>
    </location>
</feature>
<feature type="active site" description="Proton donor" evidence="1">
    <location>
        <position position="37"/>
    </location>
</feature>
<feature type="binding site" evidence="1">
    <location>
        <begin position="30"/>
        <end position="37"/>
    </location>
    <ligand>
        <name>ATP</name>
        <dbReference type="ChEBI" id="CHEBI:30616"/>
    </ligand>
</feature>
<feature type="binding site" evidence="1">
    <location>
        <position position="61"/>
    </location>
    <ligand>
        <name>(R)-pantoate</name>
        <dbReference type="ChEBI" id="CHEBI:15980"/>
    </ligand>
</feature>
<feature type="binding site" evidence="1">
    <location>
        <position position="61"/>
    </location>
    <ligand>
        <name>beta-alanine</name>
        <dbReference type="ChEBI" id="CHEBI:57966"/>
    </ligand>
</feature>
<feature type="binding site" evidence="1">
    <location>
        <begin position="148"/>
        <end position="151"/>
    </location>
    <ligand>
        <name>ATP</name>
        <dbReference type="ChEBI" id="CHEBI:30616"/>
    </ligand>
</feature>
<feature type="binding site" evidence="1">
    <location>
        <position position="154"/>
    </location>
    <ligand>
        <name>(R)-pantoate</name>
        <dbReference type="ChEBI" id="CHEBI:15980"/>
    </ligand>
</feature>
<feature type="binding site" evidence="1">
    <location>
        <position position="177"/>
    </location>
    <ligand>
        <name>ATP</name>
        <dbReference type="ChEBI" id="CHEBI:30616"/>
    </ligand>
</feature>
<feature type="binding site" evidence="1">
    <location>
        <begin position="185"/>
        <end position="188"/>
    </location>
    <ligand>
        <name>ATP</name>
        <dbReference type="ChEBI" id="CHEBI:30616"/>
    </ligand>
</feature>
<accession>A5WHC9</accession>
<keyword id="KW-0067">ATP-binding</keyword>
<keyword id="KW-0963">Cytoplasm</keyword>
<keyword id="KW-0436">Ligase</keyword>
<keyword id="KW-0547">Nucleotide-binding</keyword>
<keyword id="KW-0566">Pantothenate biosynthesis</keyword>
<organism>
    <name type="scientific">Psychrobacter sp. (strain PRwf-1)</name>
    <dbReference type="NCBI Taxonomy" id="349106"/>
    <lineage>
        <taxon>Bacteria</taxon>
        <taxon>Pseudomonadati</taxon>
        <taxon>Pseudomonadota</taxon>
        <taxon>Gammaproteobacteria</taxon>
        <taxon>Moraxellales</taxon>
        <taxon>Moraxellaceae</taxon>
        <taxon>Psychrobacter</taxon>
    </lineage>
</organism>